<reference key="1">
    <citation type="journal article" date="1991" name="Cell">
        <title>The role of CDC28 and cyclins during mitosis in the budding yeast S. cerevisiae.</title>
        <authorList>
            <person name="Surana U."/>
            <person name="Robitsch H."/>
            <person name="Price C."/>
            <person name="Schuster T."/>
            <person name="Fitch I."/>
            <person name="Futcher A.B."/>
            <person name="Nasmyth K."/>
        </authorList>
    </citation>
    <scope>NUCLEOTIDE SEQUENCE [GENOMIC DNA]</scope>
</reference>
<reference key="2">
    <citation type="journal article" date="1992" name="Genes Dev.">
        <title>Cyclin-B homologs in Saccharomyces cerevisiae function in S phase and in G2.</title>
        <authorList>
            <person name="Richardson H."/>
            <person name="Lew D.J."/>
            <person name="Henze M."/>
            <person name="Sugimoto K."/>
            <person name="Reed S.I."/>
        </authorList>
    </citation>
    <scope>NUCLEOTIDE SEQUENCE [GENOMIC DNA]</scope>
    <source>
        <strain>ATCC 204508 / S288c</strain>
    </source>
</reference>
<reference key="3">
    <citation type="journal article" date="1997" name="Nature">
        <title>The nucleotide sequence of Saccharomyces cerevisiae chromosome XVI.</title>
        <authorList>
            <person name="Bussey H."/>
            <person name="Storms R.K."/>
            <person name="Ahmed A."/>
            <person name="Albermann K."/>
            <person name="Allen E."/>
            <person name="Ansorge W."/>
            <person name="Araujo R."/>
            <person name="Aparicio A."/>
            <person name="Barrell B.G."/>
            <person name="Badcock K."/>
            <person name="Benes V."/>
            <person name="Botstein D."/>
            <person name="Bowman S."/>
            <person name="Brueckner M."/>
            <person name="Carpenter J."/>
            <person name="Cherry J.M."/>
            <person name="Chung E."/>
            <person name="Churcher C.M."/>
            <person name="Coster F."/>
            <person name="Davis K."/>
            <person name="Davis R.W."/>
            <person name="Dietrich F.S."/>
            <person name="Delius H."/>
            <person name="DiPaolo T."/>
            <person name="Dubois E."/>
            <person name="Duesterhoeft A."/>
            <person name="Duncan M."/>
            <person name="Floeth M."/>
            <person name="Fortin N."/>
            <person name="Friesen J.D."/>
            <person name="Fritz C."/>
            <person name="Goffeau A."/>
            <person name="Hall J."/>
            <person name="Hebling U."/>
            <person name="Heumann K."/>
            <person name="Hilbert H."/>
            <person name="Hillier L.W."/>
            <person name="Hunicke-Smith S."/>
            <person name="Hyman R.W."/>
            <person name="Johnston M."/>
            <person name="Kalman S."/>
            <person name="Kleine K."/>
            <person name="Komp C."/>
            <person name="Kurdi O."/>
            <person name="Lashkari D."/>
            <person name="Lew H."/>
            <person name="Lin A."/>
            <person name="Lin D."/>
            <person name="Louis E.J."/>
            <person name="Marathe R."/>
            <person name="Messenguy F."/>
            <person name="Mewes H.-W."/>
            <person name="Mirtipati S."/>
            <person name="Moestl D."/>
            <person name="Mueller-Auer S."/>
            <person name="Namath A."/>
            <person name="Nentwich U."/>
            <person name="Oefner P."/>
            <person name="Pearson D."/>
            <person name="Petel F.X."/>
            <person name="Pohl T.M."/>
            <person name="Purnelle B."/>
            <person name="Rajandream M.A."/>
            <person name="Rechmann S."/>
            <person name="Rieger M."/>
            <person name="Riles L."/>
            <person name="Roberts D."/>
            <person name="Schaefer M."/>
            <person name="Scharfe M."/>
            <person name="Scherens B."/>
            <person name="Schramm S."/>
            <person name="Schroeder M."/>
            <person name="Sdicu A.-M."/>
            <person name="Tettelin H."/>
            <person name="Urrestarazu L.A."/>
            <person name="Ushinsky S."/>
            <person name="Vierendeels F."/>
            <person name="Vissers S."/>
            <person name="Voss H."/>
            <person name="Walsh S.V."/>
            <person name="Wambutt R."/>
            <person name="Wang Y."/>
            <person name="Wedler E."/>
            <person name="Wedler H."/>
            <person name="Winnett E."/>
            <person name="Zhong W.-W."/>
            <person name="Zollner A."/>
            <person name="Vo D.H."/>
            <person name="Hani J."/>
        </authorList>
    </citation>
    <scope>NUCLEOTIDE SEQUENCE [LARGE SCALE GENOMIC DNA]</scope>
    <source>
        <strain>ATCC 204508 / S288c</strain>
    </source>
</reference>
<reference key="4">
    <citation type="journal article" date="2014" name="G3 (Bethesda)">
        <title>The reference genome sequence of Saccharomyces cerevisiae: Then and now.</title>
        <authorList>
            <person name="Engel S.R."/>
            <person name="Dietrich F.S."/>
            <person name="Fisk D.G."/>
            <person name="Binkley G."/>
            <person name="Balakrishnan R."/>
            <person name="Costanzo M.C."/>
            <person name="Dwight S.S."/>
            <person name="Hitz B.C."/>
            <person name="Karra K."/>
            <person name="Nash R.S."/>
            <person name="Weng S."/>
            <person name="Wong E.D."/>
            <person name="Lloyd P."/>
            <person name="Skrzypek M.S."/>
            <person name="Miyasato S.R."/>
            <person name="Simison M."/>
            <person name="Cherry J.M."/>
        </authorList>
    </citation>
    <scope>GENOME REANNOTATION</scope>
    <source>
        <strain>ATCC 204508 / S288c</strain>
    </source>
</reference>
<reference key="5">
    <citation type="journal article" date="1995" name="J. Cell Biol.">
        <title>Members of the NAP/SET family of proteins interact specifically with B-type cyclins.</title>
        <authorList>
            <person name="Kellogg D.R."/>
            <person name="Kikuchi A."/>
            <person name="Fujii-Nakata T."/>
            <person name="Turck C.W."/>
            <person name="Murray A.W."/>
        </authorList>
    </citation>
    <scope>INTERACTION WITH NAP1</scope>
</reference>
<reference key="6">
    <citation type="journal article" date="2003" name="Nature">
        <title>Global analysis of protein expression in yeast.</title>
        <authorList>
            <person name="Ghaemmaghami S."/>
            <person name="Huh W.-K."/>
            <person name="Bower K."/>
            <person name="Howson R.W."/>
            <person name="Belle A."/>
            <person name="Dephoure N."/>
            <person name="O'Shea E.K."/>
            <person name="Weissman J.S."/>
        </authorList>
    </citation>
    <scope>LEVEL OF PROTEIN EXPRESSION [LARGE SCALE ANALYSIS]</scope>
</reference>
<reference key="7">
    <citation type="journal article" date="2009" name="Science">
        <title>Global analysis of Cdk1 substrate phosphorylation sites provides insights into evolution.</title>
        <authorList>
            <person name="Holt L.J."/>
            <person name="Tuch B.B."/>
            <person name="Villen J."/>
            <person name="Johnson A.D."/>
            <person name="Gygi S.P."/>
            <person name="Morgan D.O."/>
        </authorList>
    </citation>
    <scope>IDENTIFICATION BY MASS SPECTROMETRY [LARGE SCALE ANALYSIS]</scope>
</reference>
<reference key="8">
    <citation type="journal article" date="2012" name="Proc. Natl. Acad. Sci. U.S.A.">
        <title>N-terminal acetylome analyses and functional insights of the N-terminal acetyltransferase NatB.</title>
        <authorList>
            <person name="Van Damme P."/>
            <person name="Lasa M."/>
            <person name="Polevoda B."/>
            <person name="Gazquez C."/>
            <person name="Elosegui-Artola A."/>
            <person name="Kim D.S."/>
            <person name="De Juan-Pardo E."/>
            <person name="Demeyer K."/>
            <person name="Hole K."/>
            <person name="Larrea E."/>
            <person name="Timmerman E."/>
            <person name="Prieto J."/>
            <person name="Arnesen T."/>
            <person name="Sherman F."/>
            <person name="Gevaert K."/>
            <person name="Aldabe R."/>
        </authorList>
    </citation>
    <scope>ACETYLATION [LARGE SCALE ANALYSIS] AT SER-2</scope>
    <scope>CLEAVAGE OF INITIATOR METHIONINE [LARGE SCALE ANALYSIS]</scope>
    <scope>IDENTIFICATION BY MASS SPECTROMETRY [LARGE SCALE ANALYSIS]</scope>
</reference>
<gene>
    <name type="primary">CLB2</name>
    <name type="ordered locus">YPR119W</name>
    <name type="ORF">P9642.6</name>
</gene>
<dbReference type="EMBL" id="M65070">
    <property type="protein sequence ID" value="AAA34502.1"/>
    <property type="molecule type" value="Genomic_DNA"/>
</dbReference>
<dbReference type="EMBL" id="X62319">
    <property type="protein sequence ID" value="CAA44195.1"/>
    <property type="molecule type" value="Genomic_DNA"/>
</dbReference>
<dbReference type="EMBL" id="U40828">
    <property type="protein sequence ID" value="AAB68060.1"/>
    <property type="molecule type" value="Genomic_DNA"/>
</dbReference>
<dbReference type="EMBL" id="BK006949">
    <property type="protein sequence ID" value="DAA11534.1"/>
    <property type="molecule type" value="Genomic_DNA"/>
</dbReference>
<dbReference type="PIR" id="S14166">
    <property type="entry name" value="S14166"/>
</dbReference>
<dbReference type="RefSeq" id="NP_015444.1">
    <property type="nucleotide sequence ID" value="NM_001184216.1"/>
</dbReference>
<dbReference type="SMR" id="P24869"/>
<dbReference type="BioGRID" id="36287">
    <property type="interactions" value="306"/>
</dbReference>
<dbReference type="ComplexPortal" id="CPX-1701">
    <property type="entry name" value="CLB2-CDC28 kinase complex"/>
</dbReference>
<dbReference type="DIP" id="DIP-658N"/>
<dbReference type="ELM" id="P24869"/>
<dbReference type="FunCoup" id="P24869">
    <property type="interactions" value="764"/>
</dbReference>
<dbReference type="IntAct" id="P24869">
    <property type="interactions" value="28"/>
</dbReference>
<dbReference type="MINT" id="P24869"/>
<dbReference type="STRING" id="4932.YPR119W"/>
<dbReference type="iPTMnet" id="P24869"/>
<dbReference type="PaxDb" id="4932-YPR119W"/>
<dbReference type="PeptideAtlas" id="P24869"/>
<dbReference type="EnsemblFungi" id="YPR119W_mRNA">
    <property type="protein sequence ID" value="YPR119W"/>
    <property type="gene ID" value="YPR119W"/>
</dbReference>
<dbReference type="GeneID" id="856236"/>
<dbReference type="KEGG" id="sce:YPR119W"/>
<dbReference type="AGR" id="SGD:S000006323"/>
<dbReference type="SGD" id="S000006323">
    <property type="gene designation" value="CLB2"/>
</dbReference>
<dbReference type="VEuPathDB" id="FungiDB:YPR119W"/>
<dbReference type="eggNOG" id="KOG0653">
    <property type="taxonomic scope" value="Eukaryota"/>
</dbReference>
<dbReference type="GeneTree" id="ENSGT00940000176520"/>
<dbReference type="HOGENOM" id="CLU_020695_10_4_1"/>
<dbReference type="InParanoid" id="P24869"/>
<dbReference type="OMA" id="ANDPFMV"/>
<dbReference type="OrthoDB" id="5590282at2759"/>
<dbReference type="BioCyc" id="YEAST:G3O-34258-MONOMER"/>
<dbReference type="BioGRID-ORCS" id="856236">
    <property type="hits" value="0 hits in 10 CRISPR screens"/>
</dbReference>
<dbReference type="CD-CODE" id="876000F7">
    <property type="entry name" value="Centrosome"/>
</dbReference>
<dbReference type="PRO" id="PR:P24869"/>
<dbReference type="Proteomes" id="UP000002311">
    <property type="component" value="Chromosome XVI"/>
</dbReference>
<dbReference type="RNAct" id="P24869">
    <property type="molecule type" value="protein"/>
</dbReference>
<dbReference type="GO" id="GO:0005935">
    <property type="term" value="C:cellular bud neck"/>
    <property type="evidence" value="ECO:0000314"/>
    <property type="project" value="SGD"/>
</dbReference>
<dbReference type="GO" id="GO:0000307">
    <property type="term" value="C:cyclin-dependent protein kinase holoenzyme complex"/>
    <property type="evidence" value="ECO:0000250"/>
    <property type="project" value="ComplexPortal"/>
</dbReference>
<dbReference type="GO" id="GO:0005737">
    <property type="term" value="C:cytoplasm"/>
    <property type="evidence" value="ECO:0000314"/>
    <property type="project" value="SGD"/>
</dbReference>
<dbReference type="GO" id="GO:0005815">
    <property type="term" value="C:microtubule organizing center"/>
    <property type="evidence" value="ECO:0000318"/>
    <property type="project" value="GO_Central"/>
</dbReference>
<dbReference type="GO" id="GO:0005634">
    <property type="term" value="C:nucleus"/>
    <property type="evidence" value="ECO:0000314"/>
    <property type="project" value="SGD"/>
</dbReference>
<dbReference type="GO" id="GO:0005819">
    <property type="term" value="C:spindle"/>
    <property type="evidence" value="ECO:0000314"/>
    <property type="project" value="SGD"/>
</dbReference>
<dbReference type="GO" id="GO:0005816">
    <property type="term" value="C:spindle pole body"/>
    <property type="evidence" value="ECO:0000314"/>
    <property type="project" value="SGD"/>
</dbReference>
<dbReference type="GO" id="GO:0016538">
    <property type="term" value="F:cyclin-dependent protein serine/threonine kinase regulator activity"/>
    <property type="evidence" value="ECO:0000314"/>
    <property type="project" value="SGD"/>
</dbReference>
<dbReference type="GO" id="GO:0051301">
    <property type="term" value="P:cell division"/>
    <property type="evidence" value="ECO:0007669"/>
    <property type="project" value="UniProtKB-KW"/>
</dbReference>
<dbReference type="GO" id="GO:0006974">
    <property type="term" value="P:DNA damage response"/>
    <property type="evidence" value="ECO:0000314"/>
    <property type="project" value="ComplexPortal"/>
</dbReference>
<dbReference type="GO" id="GO:0000082">
    <property type="term" value="P:G1/S transition of mitotic cell cycle"/>
    <property type="evidence" value="ECO:0000318"/>
    <property type="project" value="GO_Central"/>
</dbReference>
<dbReference type="GO" id="GO:0000086">
    <property type="term" value="P:G2/M transition of mitotic cell cycle"/>
    <property type="evidence" value="ECO:0000315"/>
    <property type="project" value="ComplexPortal"/>
</dbReference>
<dbReference type="GO" id="GO:0010696">
    <property type="term" value="P:positive regulation of mitotic spindle pole body separation"/>
    <property type="evidence" value="ECO:0000316"/>
    <property type="project" value="SGD"/>
</dbReference>
<dbReference type="GO" id="GO:0032888">
    <property type="term" value="P:regulation of mitotic spindle elongation"/>
    <property type="evidence" value="ECO:0000315"/>
    <property type="project" value="SGD"/>
</dbReference>
<dbReference type="GO" id="GO:0007089">
    <property type="term" value="P:traversing start control point of mitotic cell cycle"/>
    <property type="evidence" value="ECO:0000318"/>
    <property type="project" value="GO_Central"/>
</dbReference>
<dbReference type="CDD" id="cd20568">
    <property type="entry name" value="CYCLIN_CLBs_yeast_rpt1"/>
    <property type="match status" value="1"/>
</dbReference>
<dbReference type="CDD" id="cd20512">
    <property type="entry name" value="CYCLIN_CLBs_yeast_rpt2"/>
    <property type="match status" value="1"/>
</dbReference>
<dbReference type="FunFam" id="1.10.472.10:FF:000005">
    <property type="entry name" value="G2/mitotic-specific cyclin B"/>
    <property type="match status" value="1"/>
</dbReference>
<dbReference type="Gene3D" id="1.10.472.10">
    <property type="entry name" value="Cyclin-like"/>
    <property type="match status" value="2"/>
</dbReference>
<dbReference type="InterPro" id="IPR039361">
    <property type="entry name" value="Cyclin"/>
</dbReference>
<dbReference type="InterPro" id="IPR013763">
    <property type="entry name" value="Cyclin-like_dom"/>
</dbReference>
<dbReference type="InterPro" id="IPR036915">
    <property type="entry name" value="Cyclin-like_sf"/>
</dbReference>
<dbReference type="InterPro" id="IPR046965">
    <property type="entry name" value="Cyclin_A/B-like"/>
</dbReference>
<dbReference type="InterPro" id="IPR004367">
    <property type="entry name" value="Cyclin_C-dom"/>
</dbReference>
<dbReference type="InterPro" id="IPR006671">
    <property type="entry name" value="Cyclin_N"/>
</dbReference>
<dbReference type="InterPro" id="IPR048258">
    <property type="entry name" value="Cyclins_cyclin-box"/>
</dbReference>
<dbReference type="PANTHER" id="PTHR10177">
    <property type="entry name" value="CYCLINS"/>
    <property type="match status" value="1"/>
</dbReference>
<dbReference type="Pfam" id="PF02984">
    <property type="entry name" value="Cyclin_C"/>
    <property type="match status" value="1"/>
</dbReference>
<dbReference type="Pfam" id="PF00134">
    <property type="entry name" value="Cyclin_N"/>
    <property type="match status" value="1"/>
</dbReference>
<dbReference type="PIRSF" id="PIRSF001771">
    <property type="entry name" value="Cyclin_A_B_D_E"/>
    <property type="match status" value="1"/>
</dbReference>
<dbReference type="SMART" id="SM00385">
    <property type="entry name" value="CYCLIN"/>
    <property type="match status" value="2"/>
</dbReference>
<dbReference type="SMART" id="SM01332">
    <property type="entry name" value="Cyclin_C"/>
    <property type="match status" value="1"/>
</dbReference>
<dbReference type="SUPFAM" id="SSF47954">
    <property type="entry name" value="Cyclin-like"/>
    <property type="match status" value="2"/>
</dbReference>
<dbReference type="PROSITE" id="PS00292">
    <property type="entry name" value="CYCLINS"/>
    <property type="match status" value="1"/>
</dbReference>
<proteinExistence type="evidence at protein level"/>
<feature type="initiator methionine" description="Removed" evidence="5">
    <location>
        <position position="1"/>
    </location>
</feature>
<feature type="chain" id="PRO_0000080404" description="G2/mitotic-specific cyclin-2">
    <location>
        <begin position="2"/>
        <end position="491"/>
    </location>
</feature>
<feature type="region of interest" description="Disordered" evidence="1">
    <location>
        <begin position="59"/>
        <end position="107"/>
    </location>
</feature>
<feature type="region of interest" description="Disordered" evidence="1">
    <location>
        <begin position="164"/>
        <end position="184"/>
    </location>
</feature>
<feature type="compositionally biased region" description="Polar residues" evidence="1">
    <location>
        <begin position="67"/>
        <end position="77"/>
    </location>
</feature>
<feature type="modified residue" description="N-acetylserine" evidence="5">
    <location>
        <position position="2"/>
    </location>
</feature>
<sequence length="491" mass="56247">MSNPIENTENSQNTSSSRFLRNVQRLALNNVTNTTFQKSNANNPALTNFKSTLNSVKKEGSRIPQFTRESVSRSTAAQEEKRTLKENGIQLPKNNLLDDKENQDPSSQQFGALTSIKEGRAELPANISLQESSSAKEIIQHDPLKGVGSSTEVVHNSVENEKLHPARSQLQVRNTESETDSGKKRPISTIVEQELPKKFKVCDENGKEEYEWEDLDAEDVNDPFMVSEYVNDIFEYLHQLEVITLPKKEDLYQHRNIHQNRDILVNWLVKIHNKFGLLPETLYLAINIMDRFLGKELVQLDKLQLVGTSCLFIASKYEEVYSPSIKHFASETDGACTEDEIKEGEKFILKTLKFNLNYPNPMNFLRRISKADDYDIQSRTLAKFLLEISLVDFRFIGILPSLCAAAAMFMSRKMLGKGKWDGNLIHYSGGYTKEELAPVCHMIMDYLVSPIVHDEFHRKYQSRRFMKASIISVQWALKVRKNGYDIMTLHE</sequence>
<name>CG22_YEAST</name>
<keyword id="KW-0007">Acetylation</keyword>
<keyword id="KW-0131">Cell cycle</keyword>
<keyword id="KW-0132">Cell division</keyword>
<keyword id="KW-0195">Cyclin</keyword>
<keyword id="KW-0498">Mitosis</keyword>
<keyword id="KW-1185">Reference proteome</keyword>
<protein>
    <recommendedName>
        <fullName>G2/mitotic-specific cyclin-2</fullName>
    </recommendedName>
</protein>
<organism>
    <name type="scientific">Saccharomyces cerevisiae (strain ATCC 204508 / S288c)</name>
    <name type="common">Baker's yeast</name>
    <dbReference type="NCBI Taxonomy" id="559292"/>
    <lineage>
        <taxon>Eukaryota</taxon>
        <taxon>Fungi</taxon>
        <taxon>Dikarya</taxon>
        <taxon>Ascomycota</taxon>
        <taxon>Saccharomycotina</taxon>
        <taxon>Saccharomycetes</taxon>
        <taxon>Saccharomycetales</taxon>
        <taxon>Saccharomycetaceae</taxon>
        <taxon>Saccharomyces</taxon>
    </lineage>
</organism>
<accession>P24869</accession>
<accession>D6W4B8</accession>
<comment type="function">
    <text>Essential for the control of the cell cycle at the G2/M (mitosis) transition. Interacts with the CDC2 protein kinase to form MPF. G2/M cyclins accumulate steadily during G2 and are abruptly destroyed at mitosis.</text>
</comment>
<comment type="subunit">
    <text evidence="3">Interacts with NAP1.</text>
</comment>
<comment type="interaction">
    <interactant intactId="EBI-4515">
        <id>P24869</id>
    </interactant>
    <interactant intactId="EBI-26682">
        <id>P35734</id>
        <label>ASK1</label>
    </interactant>
    <organismsDiffer>false</organismsDiffer>
    <experiments>2</experiments>
</comment>
<comment type="interaction">
    <interactant intactId="EBI-4515">
        <id>P24869</id>
    </interactant>
    <interactant intactId="EBI-4746">
        <id>P20486</id>
        <label>CKS1</label>
    </interactant>
    <organismsDiffer>false</organismsDiffer>
    <experiments>3</experiments>
</comment>
<comment type="interaction">
    <interactant intactId="EBI-4515">
        <id>P24869</id>
    </interactant>
    <interactant intactId="EBI-32941">
        <id>Q03898</id>
        <label>FIN1</label>
    </interactant>
    <organismsDiffer>false</organismsDiffer>
    <experiments>2</experiments>
</comment>
<comment type="interaction">
    <interactant intactId="EBI-4515">
        <id>P24869</id>
    </interactant>
    <interactant intactId="EBI-12588">
        <id>P38826</id>
        <label>ORC6</label>
    </interactant>
    <organismsDiffer>false</organismsDiffer>
    <experiments>2</experiments>
</comment>
<comment type="interaction">
    <interactant intactId="EBI-4515">
        <id>P24869</id>
    </interactant>
    <interactant intactId="EBI-20842">
        <id>P38283</id>
        <label>SLI15</label>
    </interactant>
    <organismsDiffer>false</organismsDiffer>
    <experiments>2</experiments>
</comment>
<comment type="developmental stage">
    <text>Maximally expressed before mitosis. The levels peak late in the G2 phase of the cell cycle and are at a minimum in G1 phase.</text>
</comment>
<comment type="miscellaneous">
    <text evidence="2">Present with 339 molecules/cell in log phase SD medium.</text>
</comment>
<comment type="similarity">
    <text evidence="4">Belongs to the cyclin family. Cyclin AB subfamily.</text>
</comment>
<evidence type="ECO:0000256" key="1">
    <source>
        <dbReference type="SAM" id="MobiDB-lite"/>
    </source>
</evidence>
<evidence type="ECO:0000269" key="2">
    <source>
    </source>
</evidence>
<evidence type="ECO:0000269" key="3">
    <source>
    </source>
</evidence>
<evidence type="ECO:0000305" key="4"/>
<evidence type="ECO:0007744" key="5">
    <source>
    </source>
</evidence>